<reference key="1">
    <citation type="journal article" date="2009" name="PLoS Genet.">
        <title>Organised genome dynamics in the Escherichia coli species results in highly diverse adaptive paths.</title>
        <authorList>
            <person name="Touchon M."/>
            <person name="Hoede C."/>
            <person name="Tenaillon O."/>
            <person name="Barbe V."/>
            <person name="Baeriswyl S."/>
            <person name="Bidet P."/>
            <person name="Bingen E."/>
            <person name="Bonacorsi S."/>
            <person name="Bouchier C."/>
            <person name="Bouvet O."/>
            <person name="Calteau A."/>
            <person name="Chiapello H."/>
            <person name="Clermont O."/>
            <person name="Cruveiller S."/>
            <person name="Danchin A."/>
            <person name="Diard M."/>
            <person name="Dossat C."/>
            <person name="Karoui M.E."/>
            <person name="Frapy E."/>
            <person name="Garry L."/>
            <person name="Ghigo J.M."/>
            <person name="Gilles A.M."/>
            <person name="Johnson J."/>
            <person name="Le Bouguenec C."/>
            <person name="Lescat M."/>
            <person name="Mangenot S."/>
            <person name="Martinez-Jehanne V."/>
            <person name="Matic I."/>
            <person name="Nassif X."/>
            <person name="Oztas S."/>
            <person name="Petit M.A."/>
            <person name="Pichon C."/>
            <person name="Rouy Z."/>
            <person name="Ruf C.S."/>
            <person name="Schneider D."/>
            <person name="Tourret J."/>
            <person name="Vacherie B."/>
            <person name="Vallenet D."/>
            <person name="Medigue C."/>
            <person name="Rocha E.P.C."/>
            <person name="Denamur E."/>
        </authorList>
    </citation>
    <scope>NUCLEOTIDE SEQUENCE [LARGE SCALE GENOMIC DNA]</scope>
    <source>
        <strain>ED1a</strain>
    </source>
</reference>
<proteinExistence type="inferred from homology"/>
<sequence>MALHDENVVWHSHPVTPQQREQHHGHRGVVLWFTGLSGSGKSTVAGALEEALHKLGVSTYLLDGDNVRHGLCSDLGFSDADRKENIRRVGEVANLMVEAGLVVLTAFISPHRAERQMVRERVGEGRFIEVFVDTPLAICEARDPKGLYKKARAGELRNFTGIDSVYEAPESAEIHLNGEQLVTNLVQQLLDLLRQNDIIRS</sequence>
<gene>
    <name evidence="1" type="primary">cysC</name>
    <name type="ordered locus">ECED1_3206</name>
</gene>
<feature type="chain" id="PRO_1000117953" description="Adenylyl-sulfate kinase">
    <location>
        <begin position="1"/>
        <end position="201"/>
    </location>
</feature>
<feature type="region of interest" description="Disordered" evidence="2">
    <location>
        <begin position="1"/>
        <end position="23"/>
    </location>
</feature>
<feature type="active site" description="Phosphoserine intermediate" evidence="1">
    <location>
        <position position="109"/>
    </location>
</feature>
<feature type="binding site" evidence="1">
    <location>
        <begin position="35"/>
        <end position="42"/>
    </location>
    <ligand>
        <name>ATP</name>
        <dbReference type="ChEBI" id="CHEBI:30616"/>
    </ligand>
</feature>
<dbReference type="EC" id="2.7.1.25" evidence="1"/>
<dbReference type="EMBL" id="CU928162">
    <property type="protein sequence ID" value="CAR09222.1"/>
    <property type="molecule type" value="Genomic_DNA"/>
</dbReference>
<dbReference type="RefSeq" id="WP_001173653.1">
    <property type="nucleotide sequence ID" value="NC_011745.1"/>
</dbReference>
<dbReference type="SMR" id="B7MYQ5"/>
<dbReference type="KEGG" id="ecq:ECED1_3206"/>
<dbReference type="HOGENOM" id="CLU_046932_1_0_6"/>
<dbReference type="UniPathway" id="UPA00140">
    <property type="reaction ID" value="UER00205"/>
</dbReference>
<dbReference type="Proteomes" id="UP000000748">
    <property type="component" value="Chromosome"/>
</dbReference>
<dbReference type="GO" id="GO:0004020">
    <property type="term" value="F:adenylylsulfate kinase activity"/>
    <property type="evidence" value="ECO:0007669"/>
    <property type="project" value="UniProtKB-UniRule"/>
</dbReference>
<dbReference type="GO" id="GO:0005524">
    <property type="term" value="F:ATP binding"/>
    <property type="evidence" value="ECO:0007669"/>
    <property type="project" value="UniProtKB-UniRule"/>
</dbReference>
<dbReference type="GO" id="GO:0070814">
    <property type="term" value="P:hydrogen sulfide biosynthetic process"/>
    <property type="evidence" value="ECO:0007669"/>
    <property type="project" value="UniProtKB-UniRule"/>
</dbReference>
<dbReference type="GO" id="GO:0000103">
    <property type="term" value="P:sulfate assimilation"/>
    <property type="evidence" value="ECO:0007669"/>
    <property type="project" value="UniProtKB-UniRule"/>
</dbReference>
<dbReference type="CDD" id="cd02027">
    <property type="entry name" value="APSK"/>
    <property type="match status" value="1"/>
</dbReference>
<dbReference type="FunFam" id="3.40.50.300:FF:000212">
    <property type="entry name" value="Adenylyl-sulfate kinase"/>
    <property type="match status" value="1"/>
</dbReference>
<dbReference type="Gene3D" id="3.40.50.300">
    <property type="entry name" value="P-loop containing nucleotide triphosphate hydrolases"/>
    <property type="match status" value="1"/>
</dbReference>
<dbReference type="HAMAP" id="MF_00065">
    <property type="entry name" value="Adenylyl_sulf_kinase"/>
    <property type="match status" value="1"/>
</dbReference>
<dbReference type="InterPro" id="IPR002891">
    <property type="entry name" value="APS_kinase"/>
</dbReference>
<dbReference type="InterPro" id="IPR027417">
    <property type="entry name" value="P-loop_NTPase"/>
</dbReference>
<dbReference type="NCBIfam" id="TIGR00455">
    <property type="entry name" value="apsK"/>
    <property type="match status" value="1"/>
</dbReference>
<dbReference type="NCBIfam" id="NF003013">
    <property type="entry name" value="PRK03846.1"/>
    <property type="match status" value="1"/>
</dbReference>
<dbReference type="PANTHER" id="PTHR11055:SF63">
    <property type="entry name" value="ADENYLYL-SULFATE KINASE 1, CHLOROPLASTIC"/>
    <property type="match status" value="1"/>
</dbReference>
<dbReference type="PANTHER" id="PTHR11055">
    <property type="entry name" value="BIFUNCTIONAL 3'-PHOSPHOADENOSINE 5'-PHOSPHOSULFATE SYNTHASE"/>
    <property type="match status" value="1"/>
</dbReference>
<dbReference type="Pfam" id="PF01583">
    <property type="entry name" value="APS_kinase"/>
    <property type="match status" value="1"/>
</dbReference>
<dbReference type="SUPFAM" id="SSF52540">
    <property type="entry name" value="P-loop containing nucleoside triphosphate hydrolases"/>
    <property type="match status" value="1"/>
</dbReference>
<evidence type="ECO:0000255" key="1">
    <source>
        <dbReference type="HAMAP-Rule" id="MF_00065"/>
    </source>
</evidence>
<evidence type="ECO:0000256" key="2">
    <source>
        <dbReference type="SAM" id="MobiDB-lite"/>
    </source>
</evidence>
<accession>B7MYQ5</accession>
<name>CYSC_ECO81</name>
<comment type="function">
    <text evidence="1">Catalyzes the synthesis of activated sulfate.</text>
</comment>
<comment type="catalytic activity">
    <reaction evidence="1">
        <text>adenosine 5'-phosphosulfate + ATP = 3'-phosphoadenylyl sulfate + ADP + H(+)</text>
        <dbReference type="Rhea" id="RHEA:24152"/>
        <dbReference type="ChEBI" id="CHEBI:15378"/>
        <dbReference type="ChEBI" id="CHEBI:30616"/>
        <dbReference type="ChEBI" id="CHEBI:58243"/>
        <dbReference type="ChEBI" id="CHEBI:58339"/>
        <dbReference type="ChEBI" id="CHEBI:456216"/>
        <dbReference type="EC" id="2.7.1.25"/>
    </reaction>
</comment>
<comment type="pathway">
    <text evidence="1">Sulfur metabolism; hydrogen sulfide biosynthesis; sulfite from sulfate: step 2/3.</text>
</comment>
<comment type="similarity">
    <text evidence="1">Belongs to the APS kinase family.</text>
</comment>
<organism>
    <name type="scientific">Escherichia coli O81 (strain ED1a)</name>
    <dbReference type="NCBI Taxonomy" id="585397"/>
    <lineage>
        <taxon>Bacteria</taxon>
        <taxon>Pseudomonadati</taxon>
        <taxon>Pseudomonadota</taxon>
        <taxon>Gammaproteobacteria</taxon>
        <taxon>Enterobacterales</taxon>
        <taxon>Enterobacteriaceae</taxon>
        <taxon>Escherichia</taxon>
    </lineage>
</organism>
<keyword id="KW-0067">ATP-binding</keyword>
<keyword id="KW-0418">Kinase</keyword>
<keyword id="KW-0547">Nucleotide-binding</keyword>
<keyword id="KW-0597">Phosphoprotein</keyword>
<keyword id="KW-0808">Transferase</keyword>
<protein>
    <recommendedName>
        <fullName evidence="1">Adenylyl-sulfate kinase</fullName>
        <ecNumber evidence="1">2.7.1.25</ecNumber>
    </recommendedName>
    <alternativeName>
        <fullName evidence="1">APS kinase</fullName>
    </alternativeName>
    <alternativeName>
        <fullName evidence="1">ATP adenosine-5'-phosphosulfate 3'-phosphotransferase</fullName>
    </alternativeName>
    <alternativeName>
        <fullName evidence="1">Adenosine-5'-phosphosulfate kinase</fullName>
    </alternativeName>
</protein>